<organism>
    <name type="scientific">Saccharomyces cerevisiae (strain ATCC 204508 / S288c)</name>
    <name type="common">Baker's yeast</name>
    <dbReference type="NCBI Taxonomy" id="559292"/>
    <lineage>
        <taxon>Eukaryota</taxon>
        <taxon>Fungi</taxon>
        <taxon>Dikarya</taxon>
        <taxon>Ascomycota</taxon>
        <taxon>Saccharomycotina</taxon>
        <taxon>Saccharomycetes</taxon>
        <taxon>Saccharomycetales</taxon>
        <taxon>Saccharomycetaceae</taxon>
        <taxon>Saccharomyces</taxon>
    </lineage>
</organism>
<comment type="function">
    <text>Catalyzes the transfer of a geranyl-geranyl moiety from geranyl-geranyl pyrophosphate to proteins having the C-terminal -XCC or -XCXC, where both cysteines may become modified. Acts on YPT1 and SEC4.</text>
</comment>
<comment type="catalytic activity">
    <reaction>
        <text>geranylgeranyl diphosphate + L-cysteinyl-[protein] = S-geranylgeranyl-L-cysteinyl-[protein] + diphosphate</text>
        <dbReference type="Rhea" id="RHEA:21240"/>
        <dbReference type="Rhea" id="RHEA-COMP:10131"/>
        <dbReference type="Rhea" id="RHEA-COMP:11537"/>
        <dbReference type="ChEBI" id="CHEBI:29950"/>
        <dbReference type="ChEBI" id="CHEBI:33019"/>
        <dbReference type="ChEBI" id="CHEBI:57533"/>
        <dbReference type="ChEBI" id="CHEBI:86021"/>
        <dbReference type="EC" id="2.5.1.60"/>
    </reaction>
</comment>
<comment type="cofactor">
    <cofactor evidence="1">
        <name>Zn(2+)</name>
        <dbReference type="ChEBI" id="CHEBI:29105"/>
    </cofactor>
    <text evidence="1">Binds 1 zinc ion per subunit.</text>
</comment>
<comment type="subunit">
    <text>Heterodimer of an alpha and a beta subunit.</text>
</comment>
<comment type="interaction">
    <interactant intactId="EBI-3559">
        <id>P20133</id>
    </interactant>
    <interactant intactId="EBI-3573">
        <id>Q00618</id>
        <label>BET4</label>
    </interactant>
    <organismsDiffer>false</organismsDiffer>
    <experiments>3</experiments>
</comment>
<comment type="miscellaneous">
    <text evidence="2">Present with 1520 molecules/cell in log phase SD medium.</text>
</comment>
<comment type="similarity">
    <text evidence="3">Belongs to the protein prenyltransferase subunit beta family.</text>
</comment>
<protein>
    <recommendedName>
        <fullName>Geranylgeranyl transferase type-2 subunit beta</fullName>
        <ecNumber>2.5.1.60</ecNumber>
    </recommendedName>
    <alternativeName>
        <fullName>Geranylgeranyl transferase type II subunit beta</fullName>
        <shortName>GGTase-II-beta</shortName>
    </alternativeName>
    <alternativeName>
        <fullName>Type II protein geranyl-geranyltransferase subunit beta</fullName>
        <shortName>PGGT</shortName>
    </alternativeName>
    <alternativeName>
        <fullName>YPT1/SEC4 proteins geranylgeranyltransferase subunit beta</fullName>
    </alternativeName>
</protein>
<gene>
    <name type="primary">BET2</name>
    <name type="ordered locus">YPR176C</name>
    <name type="ORF">P9705.12</name>
</gene>
<proteinExistence type="evidence at protein level"/>
<keyword id="KW-0479">Metal-binding</keyword>
<keyword id="KW-0637">Prenyltransferase</keyword>
<keyword id="KW-1185">Reference proteome</keyword>
<keyword id="KW-0677">Repeat</keyword>
<keyword id="KW-0808">Transferase</keyword>
<keyword id="KW-0862">Zinc</keyword>
<dbReference type="EC" id="2.5.1.60"/>
<dbReference type="EMBL" id="M29585">
    <property type="protein sequence ID" value="AAA66939.1"/>
    <property type="molecule type" value="Genomic_DNA"/>
</dbReference>
<dbReference type="EMBL" id="M26597">
    <property type="protein sequence ID" value="AAA79331.1"/>
    <property type="molecule type" value="Genomic_DNA"/>
</dbReference>
<dbReference type="EMBL" id="U25842">
    <property type="protein sequence ID" value="AAB68110.1"/>
    <property type="molecule type" value="Genomic_DNA"/>
</dbReference>
<dbReference type="EMBL" id="AY558067">
    <property type="protein sequence ID" value="AAS56393.1"/>
    <property type="molecule type" value="Genomic_DNA"/>
</dbReference>
<dbReference type="EMBL" id="BK006949">
    <property type="protein sequence ID" value="DAA11593.1"/>
    <property type="molecule type" value="Genomic_DNA"/>
</dbReference>
<dbReference type="PIR" id="S59834">
    <property type="entry name" value="S59834"/>
</dbReference>
<dbReference type="RefSeq" id="NP_015502.1">
    <property type="nucleotide sequence ID" value="NM_001184273.1"/>
</dbReference>
<dbReference type="SMR" id="P20133"/>
<dbReference type="BioGRID" id="36349">
    <property type="interactions" value="359"/>
</dbReference>
<dbReference type="ComplexPortal" id="CPX-1636">
    <property type="entry name" value="Protein geranylgeranyltransferase type II complex"/>
</dbReference>
<dbReference type="DIP" id="DIP-2214N"/>
<dbReference type="FunCoup" id="P20133">
    <property type="interactions" value="372"/>
</dbReference>
<dbReference type="IntAct" id="P20133">
    <property type="interactions" value="3"/>
</dbReference>
<dbReference type="STRING" id="4932.YPR176C"/>
<dbReference type="iPTMnet" id="P20133"/>
<dbReference type="PaxDb" id="4932-YPR176C"/>
<dbReference type="PeptideAtlas" id="P20133"/>
<dbReference type="EnsemblFungi" id="YPR176C_mRNA">
    <property type="protein sequence ID" value="YPR176C"/>
    <property type="gene ID" value="YPR176C"/>
</dbReference>
<dbReference type="GeneID" id="856306"/>
<dbReference type="KEGG" id="sce:YPR176C"/>
<dbReference type="AGR" id="SGD:S000006380"/>
<dbReference type="SGD" id="S000006380">
    <property type="gene designation" value="BET2"/>
</dbReference>
<dbReference type="VEuPathDB" id="FungiDB:YPR176C"/>
<dbReference type="eggNOG" id="KOG0366">
    <property type="taxonomic scope" value="Eukaryota"/>
</dbReference>
<dbReference type="GeneTree" id="ENSGT00950000183128"/>
<dbReference type="HOGENOM" id="CLU_028946_3_0_1"/>
<dbReference type="InParanoid" id="P20133"/>
<dbReference type="OMA" id="VKRCQCP"/>
<dbReference type="OrthoDB" id="5428259at2759"/>
<dbReference type="BioCyc" id="YEAST:MONOMER3O-1"/>
<dbReference type="Reactome" id="R-SCE-6803205">
    <property type="pathway name" value="TP53 regulates transcription of several additional cell death genes whose specific roles in p53-dependent apoptosis remain uncertain"/>
</dbReference>
<dbReference type="Reactome" id="R-SCE-8873719">
    <property type="pathway name" value="RAB geranylgeranylation"/>
</dbReference>
<dbReference type="BioGRID-ORCS" id="856306">
    <property type="hits" value="2 hits in 10 CRISPR screens"/>
</dbReference>
<dbReference type="PRO" id="PR:P20133"/>
<dbReference type="Proteomes" id="UP000002311">
    <property type="component" value="Chromosome XVI"/>
</dbReference>
<dbReference type="RNAct" id="P20133">
    <property type="molecule type" value="protein"/>
</dbReference>
<dbReference type="GO" id="GO:0005829">
    <property type="term" value="C:cytosol"/>
    <property type="evidence" value="ECO:0007005"/>
    <property type="project" value="SGD"/>
</dbReference>
<dbReference type="GO" id="GO:0005968">
    <property type="term" value="C:Rab-protein geranylgeranyltransferase complex"/>
    <property type="evidence" value="ECO:0000314"/>
    <property type="project" value="SGD"/>
</dbReference>
<dbReference type="GO" id="GO:0004663">
    <property type="term" value="F:Rab geranylgeranyltransferase activity"/>
    <property type="evidence" value="ECO:0000314"/>
    <property type="project" value="SGD"/>
</dbReference>
<dbReference type="GO" id="GO:0031267">
    <property type="term" value="F:small GTPase binding"/>
    <property type="evidence" value="ECO:0000250"/>
    <property type="project" value="UniProtKB"/>
</dbReference>
<dbReference type="GO" id="GO:0008270">
    <property type="term" value="F:zinc ion binding"/>
    <property type="evidence" value="ECO:0000250"/>
    <property type="project" value="UniProtKB"/>
</dbReference>
<dbReference type="GO" id="GO:0006888">
    <property type="term" value="P:endoplasmic reticulum to Golgi vesicle-mediated transport"/>
    <property type="evidence" value="ECO:0000315"/>
    <property type="project" value="SGD"/>
</dbReference>
<dbReference type="GO" id="GO:0006612">
    <property type="term" value="P:protein targeting to membrane"/>
    <property type="evidence" value="ECO:0000315"/>
    <property type="project" value="SGD"/>
</dbReference>
<dbReference type="CDD" id="cd02894">
    <property type="entry name" value="GGTase-II"/>
    <property type="match status" value="1"/>
</dbReference>
<dbReference type="FunFam" id="1.50.10.20:FF:000012">
    <property type="entry name" value="Geranylgeranyl transferase type-2 subunit beta"/>
    <property type="match status" value="1"/>
</dbReference>
<dbReference type="Gene3D" id="1.50.10.20">
    <property type="match status" value="1"/>
</dbReference>
<dbReference type="InterPro" id="IPR045089">
    <property type="entry name" value="PGGT1B-like"/>
</dbReference>
<dbReference type="InterPro" id="IPR001330">
    <property type="entry name" value="Prenyltrans"/>
</dbReference>
<dbReference type="InterPro" id="IPR026873">
    <property type="entry name" value="Ptb1"/>
</dbReference>
<dbReference type="InterPro" id="IPR008930">
    <property type="entry name" value="Terpenoid_cyclase/PrenylTrfase"/>
</dbReference>
<dbReference type="PANTHER" id="PTHR11774">
    <property type="entry name" value="GERANYLGERANYL TRANSFERASE TYPE BETA SUBUNIT"/>
    <property type="match status" value="1"/>
</dbReference>
<dbReference type="PANTHER" id="PTHR11774:SF11">
    <property type="entry name" value="GERANYLGERANYL TRANSFERASE TYPE-2 SUBUNIT BETA"/>
    <property type="match status" value="1"/>
</dbReference>
<dbReference type="Pfam" id="PF00432">
    <property type="entry name" value="Prenyltrans"/>
    <property type="match status" value="1"/>
</dbReference>
<dbReference type="SUPFAM" id="SSF48239">
    <property type="entry name" value="Terpenoid cyclases/Protein prenyltransferases"/>
    <property type="match status" value="1"/>
</dbReference>
<reference key="1">
    <citation type="journal article" date="1990" name="Yeast">
        <title>An essential gene in Saccharomyces cerevisiae shares an upstream regulatory element with PRP4.</title>
        <authorList>
            <person name="Petersen-Bjoern S."/>
            <person name="Harrington T.R."/>
            <person name="Friesen J.D."/>
        </authorList>
    </citation>
    <scope>NUCLEOTIDE SEQUENCE [GENOMIC DNA]</scope>
</reference>
<reference key="2">
    <citation type="journal article" date="1991" name="Nature">
        <title>Dependence of Ypt1 and Sec4 membrane attachment on Bet2.</title>
        <authorList>
            <person name="Rossi G."/>
            <person name="Jiang Y."/>
            <person name="Newman A.P."/>
            <person name="Ferro-Novick S."/>
        </authorList>
    </citation>
    <scope>NUCLEOTIDE SEQUENCE [GENOMIC DNA]</scope>
</reference>
<reference key="3">
    <citation type="journal article" date="1997" name="Nature">
        <title>The nucleotide sequence of Saccharomyces cerevisiae chromosome XVI.</title>
        <authorList>
            <person name="Bussey H."/>
            <person name="Storms R.K."/>
            <person name="Ahmed A."/>
            <person name="Albermann K."/>
            <person name="Allen E."/>
            <person name="Ansorge W."/>
            <person name="Araujo R."/>
            <person name="Aparicio A."/>
            <person name="Barrell B.G."/>
            <person name="Badcock K."/>
            <person name="Benes V."/>
            <person name="Botstein D."/>
            <person name="Bowman S."/>
            <person name="Brueckner M."/>
            <person name="Carpenter J."/>
            <person name="Cherry J.M."/>
            <person name="Chung E."/>
            <person name="Churcher C.M."/>
            <person name="Coster F."/>
            <person name="Davis K."/>
            <person name="Davis R.W."/>
            <person name="Dietrich F.S."/>
            <person name="Delius H."/>
            <person name="DiPaolo T."/>
            <person name="Dubois E."/>
            <person name="Duesterhoeft A."/>
            <person name="Duncan M."/>
            <person name="Floeth M."/>
            <person name="Fortin N."/>
            <person name="Friesen J.D."/>
            <person name="Fritz C."/>
            <person name="Goffeau A."/>
            <person name="Hall J."/>
            <person name="Hebling U."/>
            <person name="Heumann K."/>
            <person name="Hilbert H."/>
            <person name="Hillier L.W."/>
            <person name="Hunicke-Smith S."/>
            <person name="Hyman R.W."/>
            <person name="Johnston M."/>
            <person name="Kalman S."/>
            <person name="Kleine K."/>
            <person name="Komp C."/>
            <person name="Kurdi O."/>
            <person name="Lashkari D."/>
            <person name="Lew H."/>
            <person name="Lin A."/>
            <person name="Lin D."/>
            <person name="Louis E.J."/>
            <person name="Marathe R."/>
            <person name="Messenguy F."/>
            <person name="Mewes H.-W."/>
            <person name="Mirtipati S."/>
            <person name="Moestl D."/>
            <person name="Mueller-Auer S."/>
            <person name="Namath A."/>
            <person name="Nentwich U."/>
            <person name="Oefner P."/>
            <person name="Pearson D."/>
            <person name="Petel F.X."/>
            <person name="Pohl T.M."/>
            <person name="Purnelle B."/>
            <person name="Rajandream M.A."/>
            <person name="Rechmann S."/>
            <person name="Rieger M."/>
            <person name="Riles L."/>
            <person name="Roberts D."/>
            <person name="Schaefer M."/>
            <person name="Scharfe M."/>
            <person name="Scherens B."/>
            <person name="Schramm S."/>
            <person name="Schroeder M."/>
            <person name="Sdicu A.-M."/>
            <person name="Tettelin H."/>
            <person name="Urrestarazu L.A."/>
            <person name="Ushinsky S."/>
            <person name="Vierendeels F."/>
            <person name="Vissers S."/>
            <person name="Voss H."/>
            <person name="Walsh S.V."/>
            <person name="Wambutt R."/>
            <person name="Wang Y."/>
            <person name="Wedler E."/>
            <person name="Wedler H."/>
            <person name="Winnett E."/>
            <person name="Zhong W.-W."/>
            <person name="Zollner A."/>
            <person name="Vo D.H."/>
            <person name="Hani J."/>
        </authorList>
    </citation>
    <scope>NUCLEOTIDE SEQUENCE [LARGE SCALE GENOMIC DNA]</scope>
    <source>
        <strain>ATCC 204508 / S288c</strain>
    </source>
</reference>
<reference key="4">
    <citation type="journal article" date="2014" name="G3 (Bethesda)">
        <title>The reference genome sequence of Saccharomyces cerevisiae: Then and now.</title>
        <authorList>
            <person name="Engel S.R."/>
            <person name="Dietrich F.S."/>
            <person name="Fisk D.G."/>
            <person name="Binkley G."/>
            <person name="Balakrishnan R."/>
            <person name="Costanzo M.C."/>
            <person name="Dwight S.S."/>
            <person name="Hitz B.C."/>
            <person name="Karra K."/>
            <person name="Nash R.S."/>
            <person name="Weng S."/>
            <person name="Wong E.D."/>
            <person name="Lloyd P."/>
            <person name="Skrzypek M.S."/>
            <person name="Miyasato S.R."/>
            <person name="Simison M."/>
            <person name="Cherry J.M."/>
        </authorList>
    </citation>
    <scope>GENOME REANNOTATION</scope>
    <source>
        <strain>ATCC 204508 / S288c</strain>
    </source>
</reference>
<reference key="5">
    <citation type="journal article" date="2007" name="Genome Res.">
        <title>Approaching a complete repository of sequence-verified protein-encoding clones for Saccharomyces cerevisiae.</title>
        <authorList>
            <person name="Hu Y."/>
            <person name="Rolfs A."/>
            <person name="Bhullar B."/>
            <person name="Murthy T.V.S."/>
            <person name="Zhu C."/>
            <person name="Berger M.F."/>
            <person name="Camargo A.A."/>
            <person name="Kelley F."/>
            <person name="McCarron S."/>
            <person name="Jepson D."/>
            <person name="Richardson A."/>
            <person name="Raphael J."/>
            <person name="Moreira D."/>
            <person name="Taycher E."/>
            <person name="Zuo D."/>
            <person name="Mohr S."/>
            <person name="Kane M.F."/>
            <person name="Williamson J."/>
            <person name="Simpson A.J.G."/>
            <person name="Bulyk M.L."/>
            <person name="Harlow E."/>
            <person name="Marsischky G."/>
            <person name="Kolodner R.D."/>
            <person name="LaBaer J."/>
        </authorList>
    </citation>
    <scope>NUCLEOTIDE SEQUENCE [GENOMIC DNA]</scope>
    <source>
        <strain>ATCC 204508 / S288c</strain>
    </source>
</reference>
<reference key="6">
    <citation type="journal article" date="1989" name="Mol. Cell. Biol.">
        <title>PRP4 (RNA4) from Saccharomyces cerevisiae: its gene product is associated with the U4/U6 small nuclear ribonucleoprotein particle.</title>
        <authorList>
            <person name="Petersen-Bjoern S."/>
            <person name="Soltyk A."/>
            <person name="Beggs J.D."/>
            <person name="Friesen J.D."/>
        </authorList>
    </citation>
    <scope>NUCLEOTIDE SEQUENCE [GENOMIC DNA] OF 1-187</scope>
</reference>
<reference key="7">
    <citation type="journal article" date="1993" name="Nature">
        <title>Bet2p and Mad2p are components of a prenyltransferase that adds geranylgeranyl onto Ypt1p and Sec4p.</title>
        <authorList>
            <person name="Jiang Y."/>
            <person name="Rossi G."/>
            <person name="Ferro-Novick S."/>
        </authorList>
    </citation>
    <scope>CHARACTERIZATION</scope>
</reference>
<reference key="8">
    <citation type="journal article" date="2003" name="Nature">
        <title>Global analysis of protein expression in yeast.</title>
        <authorList>
            <person name="Ghaemmaghami S."/>
            <person name="Huh W.-K."/>
            <person name="Bower K."/>
            <person name="Howson R.W."/>
            <person name="Belle A."/>
            <person name="Dephoure N."/>
            <person name="O'Shea E.K."/>
            <person name="Weissman J.S."/>
        </authorList>
    </citation>
    <scope>LEVEL OF PROTEIN EXPRESSION [LARGE SCALE ANALYSIS]</scope>
</reference>
<sequence>MSGSLTLLKEKHIRYIESLDTKKHNFEYWLTEHLRLNGIYWGLTALCVLDSPETFVKEEVISFVLSCWDDKYGAFAPFPRHDAHLLTTLSAVQILATYDALDVLGKDRKVRLISFIRGNQLEDGSFQGDRFGEVDTRFVYTALSALSILGELTSEVVDPAVDFVLKCYNFDGGFGLCPNAESHAAQAFTCLGALAIANKLDMLSDDQLEEIGWWLCERQLPEGGLNGRPSKLPDVCYSWWVLSSLAIIGRLDWINYEKLTEFILKCQDEKKGGISDRPENEVDVFHTVFGVAGLSLMGYDNLVPIDPIYCMPKSVTSKFKKYPYK</sequence>
<evidence type="ECO:0000250" key="1"/>
<evidence type="ECO:0000269" key="2">
    <source>
    </source>
</evidence>
<evidence type="ECO:0000305" key="3"/>
<accession>P20133</accession>
<accession>D6W4H7</accession>
<accession>P32433</accession>
<name>PGTB2_YEAST</name>
<feature type="chain" id="PRO_0000119777" description="Geranylgeranyl transferase type-2 subunit beta">
    <location>
        <begin position="1"/>
        <end position="325"/>
    </location>
</feature>
<feature type="repeat" description="PFTB 1">
    <location>
        <begin position="9"/>
        <end position="50"/>
    </location>
</feature>
<feature type="repeat" description="PFTB 2">
    <location>
        <begin position="57"/>
        <end position="99"/>
    </location>
</feature>
<feature type="repeat" description="PFTB 3">
    <location>
        <begin position="109"/>
        <end position="150"/>
    </location>
</feature>
<feature type="repeat" description="PFTB 4">
    <location>
        <begin position="157"/>
        <end position="198"/>
    </location>
</feature>
<feature type="repeat" description="PFTB 5">
    <location>
        <begin position="208"/>
        <end position="249"/>
    </location>
</feature>
<feature type="repeat" description="PFTB 6">
    <location>
        <begin position="256"/>
        <end position="298"/>
    </location>
</feature>
<feature type="binding site" evidence="1">
    <location>
        <begin position="183"/>
        <end position="185"/>
    </location>
    <ligand>
        <name>geranylgeranyl diphosphate</name>
        <dbReference type="ChEBI" id="CHEBI:57533"/>
    </ligand>
</feature>
<feature type="binding site" evidence="1">
    <location>
        <begin position="228"/>
        <end position="240"/>
    </location>
    <ligand>
        <name>geranylgeranyl diphosphate</name>
        <dbReference type="ChEBI" id="CHEBI:57533"/>
    </ligand>
</feature>
<feature type="binding site" evidence="1">
    <location>
        <position position="234"/>
    </location>
    <ligand>
        <name>Zn(2+)</name>
        <dbReference type="ChEBI" id="CHEBI:29105"/>
        <note>catalytic</note>
    </ligand>
</feature>
<feature type="binding site" evidence="1">
    <location>
        <position position="236"/>
    </location>
    <ligand>
        <name>Zn(2+)</name>
        <dbReference type="ChEBI" id="CHEBI:29105"/>
        <note>catalytic</note>
    </ligand>
</feature>
<feature type="binding site" evidence="1">
    <location>
        <position position="286"/>
    </location>
    <ligand>
        <name>Zn(2+)</name>
        <dbReference type="ChEBI" id="CHEBI:29105"/>
        <note>catalytic</note>
    </ligand>
</feature>
<feature type="sequence conflict" description="In Ref. 1 and 5." evidence="3" ref="1 5">
    <original>K</original>
    <variation>N</variation>
    <location>
        <position position="22"/>
    </location>
</feature>